<name>CXA4_RAT</name>
<organism>
    <name type="scientific">Rattus norvegicus</name>
    <name type="common">Rat</name>
    <dbReference type="NCBI Taxonomy" id="10116"/>
    <lineage>
        <taxon>Eukaryota</taxon>
        <taxon>Metazoa</taxon>
        <taxon>Chordata</taxon>
        <taxon>Craniata</taxon>
        <taxon>Vertebrata</taxon>
        <taxon>Euteleostomi</taxon>
        <taxon>Mammalia</taxon>
        <taxon>Eutheria</taxon>
        <taxon>Euarchontoglires</taxon>
        <taxon>Glires</taxon>
        <taxon>Rodentia</taxon>
        <taxon>Myomorpha</taxon>
        <taxon>Muroidea</taxon>
        <taxon>Muridae</taxon>
        <taxon>Murinae</taxon>
        <taxon>Rattus</taxon>
    </lineage>
</organism>
<dbReference type="EMBL" id="M76532">
    <property type="protein sequence ID" value="AAA40999.1"/>
    <property type="molecule type" value="Genomic_DNA"/>
</dbReference>
<dbReference type="EMBL" id="BC078837">
    <property type="protein sequence ID" value="AAH78837.1"/>
    <property type="molecule type" value="mRNA"/>
</dbReference>
<dbReference type="EMBL" id="BC086576">
    <property type="protein sequence ID" value="AAH86576.1"/>
    <property type="molecule type" value="mRNA"/>
</dbReference>
<dbReference type="PIR" id="B42053">
    <property type="entry name" value="B42053"/>
</dbReference>
<dbReference type="RefSeq" id="NP_067686.1">
    <property type="nucleotide sequence ID" value="NM_021654.2"/>
</dbReference>
<dbReference type="SMR" id="Q03190"/>
<dbReference type="FunCoup" id="Q03190">
    <property type="interactions" value="24"/>
</dbReference>
<dbReference type="STRING" id="10116.ENSRNOP00000019246"/>
<dbReference type="iPTMnet" id="Q03190"/>
<dbReference type="PhosphoSitePlus" id="Q03190"/>
<dbReference type="PaxDb" id="10116-ENSRNOP00000019246"/>
<dbReference type="Ensembl" id="ENSRNOT00000019246.6">
    <property type="protein sequence ID" value="ENSRNOP00000019246.3"/>
    <property type="gene ID" value="ENSRNOG00000014357.6"/>
</dbReference>
<dbReference type="GeneID" id="25655"/>
<dbReference type="KEGG" id="rno:25655"/>
<dbReference type="UCSC" id="RGD:2691">
    <property type="organism name" value="rat"/>
</dbReference>
<dbReference type="AGR" id="RGD:2691"/>
<dbReference type="CTD" id="2701"/>
<dbReference type="RGD" id="2691">
    <property type="gene designation" value="Gja4"/>
</dbReference>
<dbReference type="eggNOG" id="ENOG502QU20">
    <property type="taxonomic scope" value="Eukaryota"/>
</dbReference>
<dbReference type="GeneTree" id="ENSGT01090000260070"/>
<dbReference type="HOGENOM" id="CLU_037388_4_2_1"/>
<dbReference type="InParanoid" id="Q03190"/>
<dbReference type="OMA" id="MWTYIIS"/>
<dbReference type="OrthoDB" id="9993956at2759"/>
<dbReference type="PhylomeDB" id="Q03190"/>
<dbReference type="TreeFam" id="TF329606"/>
<dbReference type="Reactome" id="R-RNO-190861">
    <property type="pathway name" value="Gap junction assembly"/>
</dbReference>
<dbReference type="PRO" id="PR:Q03190"/>
<dbReference type="Proteomes" id="UP000002494">
    <property type="component" value="Chromosome 5"/>
</dbReference>
<dbReference type="Bgee" id="ENSRNOG00000014357">
    <property type="expression patterns" value="Expressed in lung and 19 other cell types or tissues"/>
</dbReference>
<dbReference type="GO" id="GO:0005922">
    <property type="term" value="C:connexin complex"/>
    <property type="evidence" value="ECO:0000314"/>
    <property type="project" value="RGD"/>
</dbReference>
<dbReference type="GO" id="GO:0005921">
    <property type="term" value="C:gap junction"/>
    <property type="evidence" value="ECO:0000314"/>
    <property type="project" value="RGD"/>
</dbReference>
<dbReference type="GO" id="GO:0005243">
    <property type="term" value="F:gap junction channel activity"/>
    <property type="evidence" value="ECO:0000318"/>
    <property type="project" value="GO_Central"/>
</dbReference>
<dbReference type="GO" id="GO:0001568">
    <property type="term" value="P:blood vessel development"/>
    <property type="evidence" value="ECO:0000266"/>
    <property type="project" value="RGD"/>
</dbReference>
<dbReference type="GO" id="GO:0006816">
    <property type="term" value="P:calcium ion transport"/>
    <property type="evidence" value="ECO:0000315"/>
    <property type="project" value="RGD"/>
</dbReference>
<dbReference type="GO" id="GO:0007267">
    <property type="term" value="P:cell-cell signaling"/>
    <property type="evidence" value="ECO:0000315"/>
    <property type="project" value="RGD"/>
</dbReference>
<dbReference type="GO" id="GO:0003158">
    <property type="term" value="P:endothelium development"/>
    <property type="evidence" value="ECO:0000270"/>
    <property type="project" value="RGD"/>
</dbReference>
<dbReference type="GO" id="GO:0048265">
    <property type="term" value="P:response to pain"/>
    <property type="evidence" value="ECO:0000270"/>
    <property type="project" value="RGD"/>
</dbReference>
<dbReference type="FunFam" id="1.20.1440.80:FF:000001">
    <property type="entry name" value="Gap junction alpha-1"/>
    <property type="match status" value="1"/>
</dbReference>
<dbReference type="Gene3D" id="1.20.1440.80">
    <property type="entry name" value="Gap junction channel protein cysteine-rich domain"/>
    <property type="match status" value="1"/>
</dbReference>
<dbReference type="InterPro" id="IPR000500">
    <property type="entry name" value="Connexin"/>
</dbReference>
<dbReference type="InterPro" id="IPR002263">
    <property type="entry name" value="Connexin37"/>
</dbReference>
<dbReference type="InterPro" id="IPR019570">
    <property type="entry name" value="Connexin_CCC"/>
</dbReference>
<dbReference type="InterPro" id="IPR017990">
    <property type="entry name" value="Connexin_CS"/>
</dbReference>
<dbReference type="InterPro" id="IPR013092">
    <property type="entry name" value="Connexin_N"/>
</dbReference>
<dbReference type="InterPro" id="IPR038359">
    <property type="entry name" value="Connexin_N_sf"/>
</dbReference>
<dbReference type="PANTHER" id="PTHR11984">
    <property type="entry name" value="CONNEXIN"/>
    <property type="match status" value="1"/>
</dbReference>
<dbReference type="PANTHER" id="PTHR11984:SF54">
    <property type="entry name" value="GAP JUNCTION ALPHA-4 PROTEIN"/>
    <property type="match status" value="1"/>
</dbReference>
<dbReference type="Pfam" id="PF00029">
    <property type="entry name" value="Connexin"/>
    <property type="match status" value="1"/>
</dbReference>
<dbReference type="PRINTS" id="PR00206">
    <property type="entry name" value="CONNEXIN"/>
</dbReference>
<dbReference type="PRINTS" id="PR01134">
    <property type="entry name" value="CONNEXINA4"/>
</dbReference>
<dbReference type="SMART" id="SM00037">
    <property type="entry name" value="CNX"/>
    <property type="match status" value="1"/>
</dbReference>
<dbReference type="SMART" id="SM01089">
    <property type="entry name" value="Connexin_CCC"/>
    <property type="match status" value="1"/>
</dbReference>
<dbReference type="PROSITE" id="PS00407">
    <property type="entry name" value="CONNEXINS_1"/>
    <property type="match status" value="1"/>
</dbReference>
<dbReference type="PROSITE" id="PS00408">
    <property type="entry name" value="CONNEXINS_2"/>
    <property type="match status" value="1"/>
</dbReference>
<reference key="1">
    <citation type="journal article" date="1992" name="J. Biol. Chem.">
        <title>Four novel members of the connexin family of gap junction proteins. Molecular cloning, expression, and chromosome mapping.</title>
        <authorList>
            <person name="Haefliger J.-A."/>
            <person name="Bruzzone R."/>
            <person name="Jenkins N.A."/>
            <person name="Gilbert D.J."/>
            <person name="Copeland N.G."/>
            <person name="Paul D.L."/>
        </authorList>
    </citation>
    <scope>NUCLEOTIDE SEQUENCE [GENOMIC DNA]</scope>
    <source>
        <strain>Sprague-Dawley</strain>
        <tissue>Lung</tissue>
    </source>
</reference>
<reference key="2">
    <citation type="journal article" date="2004" name="Genome Res.">
        <title>The status, quality, and expansion of the NIH full-length cDNA project: the Mammalian Gene Collection (MGC).</title>
        <authorList>
            <consortium name="The MGC Project Team"/>
        </authorList>
    </citation>
    <scope>NUCLEOTIDE SEQUENCE [LARGE SCALE MRNA]</scope>
    <source>
        <tissue>Kidney</tissue>
        <tissue>Ovary</tissue>
    </source>
</reference>
<feature type="chain" id="PRO_0000057817" description="Gap junction alpha-4 protein">
    <location>
        <begin position="1"/>
        <end position="333"/>
    </location>
</feature>
<feature type="topological domain" description="Cytoplasmic" evidence="1">
    <location>
        <begin position="1"/>
        <end position="20"/>
    </location>
</feature>
<feature type="transmembrane region" description="Helical" evidence="1">
    <location>
        <begin position="21"/>
        <end position="40"/>
    </location>
</feature>
<feature type="topological domain" description="Extracellular" evidence="1">
    <location>
        <begin position="41"/>
        <end position="76"/>
    </location>
</feature>
<feature type="transmembrane region" description="Helical" evidence="1">
    <location>
        <begin position="77"/>
        <end position="99"/>
    </location>
</feature>
<feature type="topological domain" description="Cytoplasmic" evidence="1">
    <location>
        <begin position="100"/>
        <end position="148"/>
    </location>
</feature>
<feature type="transmembrane region" description="Helical" evidence="1">
    <location>
        <begin position="149"/>
        <end position="171"/>
    </location>
</feature>
<feature type="topological domain" description="Extracellular" evidence="1">
    <location>
        <begin position="172"/>
        <end position="208"/>
    </location>
</feature>
<feature type="transmembrane region" description="Helical" evidence="1">
    <location>
        <begin position="209"/>
        <end position="231"/>
    </location>
</feature>
<feature type="topological domain" description="Cytoplasmic" evidence="1">
    <location>
        <begin position="232"/>
        <end position="333"/>
    </location>
</feature>
<feature type="region of interest" description="Disordered" evidence="2">
    <location>
        <begin position="292"/>
        <end position="333"/>
    </location>
</feature>
<feature type="compositionally biased region" description="Low complexity" evidence="2">
    <location>
        <begin position="318"/>
        <end position="333"/>
    </location>
</feature>
<accession>Q03190</accession>
<comment type="function">
    <text>One gap junction consists of a cluster of closely packed pairs of transmembrane channels, the connexons, through which materials of low MW diffuse from one cell to a neighboring cell.</text>
</comment>
<comment type="subunit">
    <text>A connexon is composed of a hexamer of connexins.</text>
</comment>
<comment type="subcellular location">
    <subcellularLocation>
        <location>Cell membrane</location>
        <topology>Multi-pass membrane protein</topology>
    </subcellularLocation>
    <subcellularLocation>
        <location>Cell junction</location>
        <location>Gap junction</location>
    </subcellularLocation>
</comment>
<comment type="tissue specificity">
    <text>Highly expressed in lung.</text>
</comment>
<comment type="similarity">
    <text evidence="3">Belongs to the connexin family. Alpha-type (group II) subfamily.</text>
</comment>
<evidence type="ECO:0000255" key="1"/>
<evidence type="ECO:0000256" key="2">
    <source>
        <dbReference type="SAM" id="MobiDB-lite"/>
    </source>
</evidence>
<evidence type="ECO:0000305" key="3"/>
<proteinExistence type="evidence at transcript level"/>
<gene>
    <name type="primary">Gja4</name>
    <name type="synonym">Cxn-37</name>
</gene>
<sequence length="333" mass="37556">MGDWGFLEKLLDQVQEHSTVVGKIWLTVLFIFRILILGLAGESVWGDEQSDFECNTAQPGCTNVCYDQAFPISHIRYWVLQFLFVSTPTLIYLGHVIYLSRREERLRQKEGELRALPSKDPHVERALAAIEHQMAKISVAEDGRLRIRGALMGTYVISVLCKSVLEAGFLYGQWRLYGWTMEPVFVCQRAPCPHVVDCYVSRPTEKTIFIIFMLVVGVISLVLNLLELVHLLCRCVSREIKARRDHDTRPAQGSASDPYPEQVFFYLPMGEGPSSPPCPTYNGLSSTEQNWANLTTEERLTSTRPPPFVNAAPQGGQKSSSRPNSSASKKQYV</sequence>
<protein>
    <recommendedName>
        <fullName>Gap junction alpha-4 protein</fullName>
    </recommendedName>
    <alternativeName>
        <fullName>Connexin-37</fullName>
        <shortName>Cx37</shortName>
    </alternativeName>
</protein>
<keyword id="KW-0965">Cell junction</keyword>
<keyword id="KW-1003">Cell membrane</keyword>
<keyword id="KW-0303">Gap junction</keyword>
<keyword id="KW-0472">Membrane</keyword>
<keyword id="KW-1185">Reference proteome</keyword>
<keyword id="KW-0812">Transmembrane</keyword>
<keyword id="KW-1133">Transmembrane helix</keyword>